<comment type="function">
    <text evidence="1">Protein S19 forms a complex with S13 that binds strongly to the 16S ribosomal RNA.</text>
</comment>
<comment type="subcellular location">
    <subcellularLocation>
        <location>Plastid</location>
        <location>Chloroplast</location>
    </subcellularLocation>
</comment>
<comment type="similarity">
    <text evidence="1">Belongs to the universal ribosomal protein uS19 family.</text>
</comment>
<accession>Q0G9H9</accession>
<sequence length="92" mass="10596">MTRSLKKNPFVANNFLGKIEKLNMREEKEIIITWSRASTIIPTMIGHTIAIHNGKDHLPIYITDRMVGHKLGEFAPTLTFKGHARNDNRSRR</sequence>
<organism>
    <name type="scientific">Liriodendron tulipifera</name>
    <name type="common">Tuliptree</name>
    <name type="synonym">Tulip poplar</name>
    <dbReference type="NCBI Taxonomy" id="3415"/>
    <lineage>
        <taxon>Eukaryota</taxon>
        <taxon>Viridiplantae</taxon>
        <taxon>Streptophyta</taxon>
        <taxon>Embryophyta</taxon>
        <taxon>Tracheophyta</taxon>
        <taxon>Spermatophyta</taxon>
        <taxon>Magnoliopsida</taxon>
        <taxon>Magnoliidae</taxon>
        <taxon>Magnoliales</taxon>
        <taxon>Magnoliaceae</taxon>
        <taxon>Liriodendron</taxon>
    </lineage>
</organism>
<protein>
    <recommendedName>
        <fullName evidence="1">Small ribosomal subunit protein uS19c</fullName>
    </recommendedName>
    <alternativeName>
        <fullName evidence="2">30S ribosomal protein S19, chloroplastic</fullName>
    </alternativeName>
</protein>
<keyword id="KW-0150">Chloroplast</keyword>
<keyword id="KW-0934">Plastid</keyword>
<keyword id="KW-0687">Ribonucleoprotein</keyword>
<keyword id="KW-0689">Ribosomal protein</keyword>
<keyword id="KW-0694">RNA-binding</keyword>
<keyword id="KW-0699">rRNA-binding</keyword>
<evidence type="ECO:0000255" key="1">
    <source>
        <dbReference type="HAMAP-Rule" id="MF_00531"/>
    </source>
</evidence>
<evidence type="ECO:0000305" key="2"/>
<gene>
    <name evidence="1" type="primary">rps19</name>
</gene>
<reference key="1">
    <citation type="journal article" date="2006" name="BMC Evol. Biol.">
        <title>Complete plastid genome sequences of Drimys, Liriodendron, and Piper: implications for the phylogenetic relationships of magnoliids.</title>
        <authorList>
            <person name="Cai Z."/>
            <person name="Penaflor C."/>
            <person name="Kuehl J.V."/>
            <person name="Leebens-Mack J."/>
            <person name="Carlson J.E."/>
            <person name="dePamphilis C.W."/>
            <person name="Boore J.L."/>
            <person name="Jansen R.K."/>
        </authorList>
    </citation>
    <scope>NUCLEOTIDE SEQUENCE [LARGE SCALE GENOMIC DNA]</scope>
</reference>
<geneLocation type="chloroplast"/>
<name>RR19_LIRTU</name>
<dbReference type="EMBL" id="DQ899947">
    <property type="protein sequence ID" value="ABI32549.1"/>
    <property type="molecule type" value="Genomic_DNA"/>
</dbReference>
<dbReference type="RefSeq" id="YP_740242.1">
    <property type="nucleotide sequence ID" value="NC_008326.1"/>
</dbReference>
<dbReference type="SMR" id="Q0G9H9"/>
<dbReference type="GeneID" id="4266666"/>
<dbReference type="GO" id="GO:0009507">
    <property type="term" value="C:chloroplast"/>
    <property type="evidence" value="ECO:0007669"/>
    <property type="project" value="UniProtKB-SubCell"/>
</dbReference>
<dbReference type="GO" id="GO:0005763">
    <property type="term" value="C:mitochondrial small ribosomal subunit"/>
    <property type="evidence" value="ECO:0007669"/>
    <property type="project" value="TreeGrafter"/>
</dbReference>
<dbReference type="GO" id="GO:0019843">
    <property type="term" value="F:rRNA binding"/>
    <property type="evidence" value="ECO:0007669"/>
    <property type="project" value="UniProtKB-UniRule"/>
</dbReference>
<dbReference type="GO" id="GO:0003735">
    <property type="term" value="F:structural constituent of ribosome"/>
    <property type="evidence" value="ECO:0007669"/>
    <property type="project" value="InterPro"/>
</dbReference>
<dbReference type="GO" id="GO:0000028">
    <property type="term" value="P:ribosomal small subunit assembly"/>
    <property type="evidence" value="ECO:0007669"/>
    <property type="project" value="TreeGrafter"/>
</dbReference>
<dbReference type="GO" id="GO:0006412">
    <property type="term" value="P:translation"/>
    <property type="evidence" value="ECO:0007669"/>
    <property type="project" value="UniProtKB-UniRule"/>
</dbReference>
<dbReference type="FunFam" id="3.30.860.10:FF:000001">
    <property type="entry name" value="30S ribosomal protein S19"/>
    <property type="match status" value="1"/>
</dbReference>
<dbReference type="Gene3D" id="3.30.860.10">
    <property type="entry name" value="30s Ribosomal Protein S19, Chain A"/>
    <property type="match status" value="1"/>
</dbReference>
<dbReference type="HAMAP" id="MF_00531">
    <property type="entry name" value="Ribosomal_uS19"/>
    <property type="match status" value="1"/>
</dbReference>
<dbReference type="InterPro" id="IPR002222">
    <property type="entry name" value="Ribosomal_uS19"/>
</dbReference>
<dbReference type="InterPro" id="IPR005732">
    <property type="entry name" value="Ribosomal_uS19_bac-type"/>
</dbReference>
<dbReference type="InterPro" id="IPR020934">
    <property type="entry name" value="Ribosomal_uS19_CS"/>
</dbReference>
<dbReference type="InterPro" id="IPR023575">
    <property type="entry name" value="Ribosomal_uS19_SF"/>
</dbReference>
<dbReference type="NCBIfam" id="TIGR01050">
    <property type="entry name" value="rpsS_bact"/>
    <property type="match status" value="1"/>
</dbReference>
<dbReference type="PANTHER" id="PTHR11880">
    <property type="entry name" value="RIBOSOMAL PROTEIN S19P FAMILY MEMBER"/>
    <property type="match status" value="1"/>
</dbReference>
<dbReference type="PANTHER" id="PTHR11880:SF8">
    <property type="entry name" value="SMALL RIBOSOMAL SUBUNIT PROTEIN US19M"/>
    <property type="match status" value="1"/>
</dbReference>
<dbReference type="Pfam" id="PF00203">
    <property type="entry name" value="Ribosomal_S19"/>
    <property type="match status" value="1"/>
</dbReference>
<dbReference type="PIRSF" id="PIRSF002144">
    <property type="entry name" value="Ribosomal_S19"/>
    <property type="match status" value="1"/>
</dbReference>
<dbReference type="PRINTS" id="PR00975">
    <property type="entry name" value="RIBOSOMALS19"/>
</dbReference>
<dbReference type="SUPFAM" id="SSF54570">
    <property type="entry name" value="Ribosomal protein S19"/>
    <property type="match status" value="1"/>
</dbReference>
<dbReference type="PROSITE" id="PS00323">
    <property type="entry name" value="RIBOSOMAL_S19"/>
    <property type="match status" value="1"/>
</dbReference>
<feature type="chain" id="PRO_0000276912" description="Small ribosomal subunit protein uS19c">
    <location>
        <begin position="1"/>
        <end position="92"/>
    </location>
</feature>
<proteinExistence type="inferred from homology"/>